<dbReference type="EMBL" id="DQ383815">
    <property type="protein sequence ID" value="ABD47203.1"/>
    <property type="molecule type" value="Genomic_DNA"/>
</dbReference>
<dbReference type="RefSeq" id="YP_588175.1">
    <property type="nucleotide sequence ID" value="NC_007977.1"/>
</dbReference>
<dbReference type="SMR" id="Q1KXQ1"/>
<dbReference type="EnsemblPlants" id="mRNA:HanXRQr2_Chr08g0323331">
    <property type="protein sequence ID" value="CDS:HanXRQr2_Chr08g0323331.1"/>
    <property type="gene ID" value="HanXRQr2_Chr08g0323331"/>
</dbReference>
<dbReference type="EnsemblPlants" id="mRNA:HanXRQr2_Chr17g0812071">
    <property type="protein sequence ID" value="CDS:HanXRQr2_Chr17g0812071.1"/>
    <property type="gene ID" value="HanXRQr2_Chr17g0812071"/>
</dbReference>
<dbReference type="GeneID" id="4055630"/>
<dbReference type="Gramene" id="mRNA:HanXRQr2_Chr08g0323331">
    <property type="protein sequence ID" value="CDS:HanXRQr2_Chr08g0323331.1"/>
    <property type="gene ID" value="HanXRQr2_Chr08g0323331"/>
</dbReference>
<dbReference type="Gramene" id="mRNA:HanXRQr2_Chr17g0812071">
    <property type="protein sequence ID" value="CDS:HanXRQr2_Chr17g0812071.1"/>
    <property type="gene ID" value="HanXRQr2_Chr17g0812071"/>
</dbReference>
<dbReference type="KEGG" id="han:4055630"/>
<dbReference type="OMA" id="RKAHWKR"/>
<dbReference type="GO" id="GO:0009507">
    <property type="term" value="C:chloroplast"/>
    <property type="evidence" value="ECO:0007669"/>
    <property type="project" value="UniProtKB-SubCell"/>
</dbReference>
<dbReference type="GO" id="GO:0015934">
    <property type="term" value="C:large ribosomal subunit"/>
    <property type="evidence" value="ECO:0007669"/>
    <property type="project" value="InterPro"/>
</dbReference>
<dbReference type="GO" id="GO:0003735">
    <property type="term" value="F:structural constituent of ribosome"/>
    <property type="evidence" value="ECO:0007669"/>
    <property type="project" value="InterPro"/>
</dbReference>
<dbReference type="GO" id="GO:0006412">
    <property type="term" value="P:translation"/>
    <property type="evidence" value="ECO:0007669"/>
    <property type="project" value="UniProtKB-UniRule"/>
</dbReference>
<dbReference type="HAMAP" id="MF_00340">
    <property type="entry name" value="Ribosomal_bL32"/>
    <property type="match status" value="1"/>
</dbReference>
<dbReference type="InterPro" id="IPR002677">
    <property type="entry name" value="Ribosomal_bL32"/>
</dbReference>
<dbReference type="InterPro" id="IPR044958">
    <property type="entry name" value="Ribosomal_bL32_plant/cyanobact"/>
</dbReference>
<dbReference type="InterPro" id="IPR011332">
    <property type="entry name" value="Ribosomal_zn-bd"/>
</dbReference>
<dbReference type="PANTHER" id="PTHR36083">
    <property type="entry name" value="50S RIBOSOMAL PROTEIN L32, CHLOROPLASTIC"/>
    <property type="match status" value="1"/>
</dbReference>
<dbReference type="PANTHER" id="PTHR36083:SF1">
    <property type="entry name" value="LARGE RIBOSOMAL SUBUNIT PROTEIN BL32C"/>
    <property type="match status" value="1"/>
</dbReference>
<dbReference type="Pfam" id="PF01783">
    <property type="entry name" value="Ribosomal_L32p"/>
    <property type="match status" value="1"/>
</dbReference>
<dbReference type="SUPFAM" id="SSF57829">
    <property type="entry name" value="Zn-binding ribosomal proteins"/>
    <property type="match status" value="1"/>
</dbReference>
<evidence type="ECO:0000255" key="1">
    <source>
        <dbReference type="HAMAP-Rule" id="MF_00340"/>
    </source>
</evidence>
<evidence type="ECO:0000305" key="2"/>
<accession>Q1KXQ1</accession>
<organism>
    <name type="scientific">Helianthus annuus</name>
    <name type="common">Common sunflower</name>
    <dbReference type="NCBI Taxonomy" id="4232"/>
    <lineage>
        <taxon>Eukaryota</taxon>
        <taxon>Viridiplantae</taxon>
        <taxon>Streptophyta</taxon>
        <taxon>Embryophyta</taxon>
        <taxon>Tracheophyta</taxon>
        <taxon>Spermatophyta</taxon>
        <taxon>Magnoliopsida</taxon>
        <taxon>eudicotyledons</taxon>
        <taxon>Gunneridae</taxon>
        <taxon>Pentapetalae</taxon>
        <taxon>asterids</taxon>
        <taxon>campanulids</taxon>
        <taxon>Asterales</taxon>
        <taxon>Asteraceae</taxon>
        <taxon>Asteroideae</taxon>
        <taxon>Heliantheae alliance</taxon>
        <taxon>Heliantheae</taxon>
        <taxon>Helianthus</taxon>
    </lineage>
</organism>
<protein>
    <recommendedName>
        <fullName evidence="1">Large ribosomal subunit protein bL32c</fullName>
    </recommendedName>
    <alternativeName>
        <fullName evidence="2">50S ribosomal protein L32, chloroplastic</fullName>
    </alternativeName>
</protein>
<name>RK32_HELAN</name>
<reference key="1">
    <citation type="submission" date="2006-01" db="EMBL/GenBank/DDBJ databases">
        <title>A comparison of the first two published chloroplast genomes in Asteraceae: Lactuca and Helianthus.</title>
        <authorList>
            <person name="Timme R.E."/>
            <person name="Kuehl J.V."/>
            <person name="Boore J.L."/>
            <person name="Jansen R.K."/>
        </authorList>
    </citation>
    <scope>NUCLEOTIDE SEQUENCE [LARGE SCALE GENOMIC DNA]</scope>
    <source>
        <strain>cv. HA383</strain>
    </source>
</reference>
<geneLocation type="chloroplast"/>
<sequence length="54" mass="6027">MAVPKKRTSISKKRIRKNIWKRKGYGAALKALSLGKSLSTGSSKSFFVRQTNKS</sequence>
<proteinExistence type="inferred from homology"/>
<feature type="chain" id="PRO_0000276472" description="Large ribosomal subunit protein bL32c">
    <location>
        <begin position="1"/>
        <end position="54"/>
    </location>
</feature>
<comment type="subcellular location">
    <subcellularLocation>
        <location>Plastid</location>
        <location>Chloroplast</location>
    </subcellularLocation>
</comment>
<comment type="similarity">
    <text evidence="1">Belongs to the bacterial ribosomal protein bL32 family.</text>
</comment>
<keyword id="KW-0150">Chloroplast</keyword>
<keyword id="KW-0934">Plastid</keyword>
<keyword id="KW-0687">Ribonucleoprotein</keyword>
<keyword id="KW-0689">Ribosomal protein</keyword>
<gene>
    <name evidence="1" type="primary">rpl32</name>
</gene>